<comment type="function">
    <text evidence="1">Transcriptional factor involved in regulation of membrane lipid biosynthesis by repressing genes involved in fatty acid and phospholipid metabolism.</text>
</comment>
<comment type="similarity">
    <text evidence="1">Belongs to the FapR family.</text>
</comment>
<name>FAPR_STAAW</name>
<protein>
    <recommendedName>
        <fullName evidence="1">Transcription factor FapR</fullName>
    </recommendedName>
    <alternativeName>
        <fullName evidence="1">Fatty acid and phospholipid biosynthesis regulator</fullName>
    </alternativeName>
</protein>
<reference key="1">
    <citation type="journal article" date="2002" name="Lancet">
        <title>Genome and virulence determinants of high virulence community-acquired MRSA.</title>
        <authorList>
            <person name="Baba T."/>
            <person name="Takeuchi F."/>
            <person name="Kuroda M."/>
            <person name="Yuzawa H."/>
            <person name="Aoki K."/>
            <person name="Oguchi A."/>
            <person name="Nagai Y."/>
            <person name="Iwama N."/>
            <person name="Asano K."/>
            <person name="Naimi T."/>
            <person name="Kuroda H."/>
            <person name="Cui L."/>
            <person name="Yamamoto K."/>
            <person name="Hiramatsu K."/>
        </authorList>
    </citation>
    <scope>NUCLEOTIDE SEQUENCE [LARGE SCALE GENOMIC DNA]</scope>
    <source>
        <strain>MW2</strain>
    </source>
</reference>
<sequence length="185" mass="21434">MKLKKDKRREAIRQQIDSNPFITDHELSDLFQVSIQTIRLDRTYLNIPELRKRIKLVAEKNYDQISSIEEQEFIGDLIQVNPNVKAQSILDITSDSVFHKTGIARGHVLFAQANSLCVALIKQPTVLTHESSIQFIEKVKLNDTVRAEARVVNQTAKHYYVEVKSYVKHTLVFKGNFKMFYDKRG</sequence>
<accession>P67621</accession>
<accession>Q99UP0</accession>
<organism>
    <name type="scientific">Staphylococcus aureus (strain MW2)</name>
    <dbReference type="NCBI Taxonomy" id="196620"/>
    <lineage>
        <taxon>Bacteria</taxon>
        <taxon>Bacillati</taxon>
        <taxon>Bacillota</taxon>
        <taxon>Bacilli</taxon>
        <taxon>Bacillales</taxon>
        <taxon>Staphylococcaceae</taxon>
        <taxon>Staphylococcus</taxon>
    </lineage>
</organism>
<dbReference type="EMBL" id="BA000033">
    <property type="protein sequence ID" value="BAB94976.1"/>
    <property type="molecule type" value="Genomic_DNA"/>
</dbReference>
<dbReference type="SMR" id="P67621"/>
<dbReference type="KEGG" id="sam:MW1111"/>
<dbReference type="HOGENOM" id="CLU_095708_0_0_9"/>
<dbReference type="GO" id="GO:0003677">
    <property type="term" value="F:DNA binding"/>
    <property type="evidence" value="ECO:0007669"/>
    <property type="project" value="UniProtKB-KW"/>
</dbReference>
<dbReference type="GO" id="GO:0003700">
    <property type="term" value="F:DNA-binding transcription factor activity"/>
    <property type="evidence" value="ECO:0007669"/>
    <property type="project" value="UniProtKB-UniRule"/>
</dbReference>
<dbReference type="GO" id="GO:0006633">
    <property type="term" value="P:fatty acid biosynthetic process"/>
    <property type="evidence" value="ECO:0007669"/>
    <property type="project" value="UniProtKB-KW"/>
</dbReference>
<dbReference type="GO" id="GO:0045892">
    <property type="term" value="P:negative regulation of DNA-templated transcription"/>
    <property type="evidence" value="ECO:0007669"/>
    <property type="project" value="UniProtKB-UniRule"/>
</dbReference>
<dbReference type="GO" id="GO:0045717">
    <property type="term" value="P:negative regulation of fatty acid biosynthetic process"/>
    <property type="evidence" value="ECO:0007669"/>
    <property type="project" value="UniProtKB-UniRule"/>
</dbReference>
<dbReference type="CDD" id="cd03440">
    <property type="entry name" value="hot_dog"/>
    <property type="match status" value="1"/>
</dbReference>
<dbReference type="Gene3D" id="3.10.129.10">
    <property type="entry name" value="Hotdog Thioesterase"/>
    <property type="match status" value="1"/>
</dbReference>
<dbReference type="Gene3D" id="1.10.10.10">
    <property type="entry name" value="Winged helix-like DNA-binding domain superfamily/Winged helix DNA-binding domain"/>
    <property type="match status" value="1"/>
</dbReference>
<dbReference type="HAMAP" id="MF_01814">
    <property type="entry name" value="Transcrip_fact_FapR"/>
    <property type="match status" value="1"/>
</dbReference>
<dbReference type="InterPro" id="IPR029069">
    <property type="entry name" value="HotDog_dom_sf"/>
</dbReference>
<dbReference type="InterPro" id="IPR006683">
    <property type="entry name" value="Thioestr_dom"/>
</dbReference>
<dbReference type="InterPro" id="IPR017275">
    <property type="entry name" value="Transcription_factor_FapR"/>
</dbReference>
<dbReference type="InterPro" id="IPR036388">
    <property type="entry name" value="WH-like_DNA-bd_sf"/>
</dbReference>
<dbReference type="NCBIfam" id="NF003359">
    <property type="entry name" value="PRK04424.1"/>
    <property type="match status" value="1"/>
</dbReference>
<dbReference type="Pfam" id="PF03061">
    <property type="entry name" value="4HBT"/>
    <property type="match status" value="1"/>
</dbReference>
<dbReference type="PIRSF" id="PIRSF037733">
    <property type="entry name" value="Transcription_factor_FapR"/>
    <property type="match status" value="1"/>
</dbReference>
<dbReference type="SUPFAM" id="SSF54637">
    <property type="entry name" value="Thioesterase/thiol ester dehydrase-isomerase"/>
    <property type="match status" value="1"/>
</dbReference>
<evidence type="ECO:0000255" key="1">
    <source>
        <dbReference type="HAMAP-Rule" id="MF_01814"/>
    </source>
</evidence>
<proteinExistence type="inferred from homology"/>
<feature type="chain" id="PRO_0000172831" description="Transcription factor FapR">
    <location>
        <begin position="1"/>
        <end position="185"/>
    </location>
</feature>
<gene>
    <name evidence="1" type="primary">fapR</name>
    <name type="ordered locus">MW1111</name>
</gene>
<keyword id="KW-0238">DNA-binding</keyword>
<keyword id="KW-0275">Fatty acid biosynthesis</keyword>
<keyword id="KW-0276">Fatty acid metabolism</keyword>
<keyword id="KW-0444">Lipid biosynthesis</keyword>
<keyword id="KW-0443">Lipid metabolism</keyword>
<keyword id="KW-0678">Repressor</keyword>
<keyword id="KW-0804">Transcription</keyword>
<keyword id="KW-0805">Transcription regulation</keyword>